<reference key="1">
    <citation type="journal article" date="2009" name="J. Bacteriol.">
        <title>Complete genome sequence of the extremophilic Bacillus cereus strain Q1 with industrial applications.</title>
        <authorList>
            <person name="Xiong Z."/>
            <person name="Jiang Y."/>
            <person name="Qi D."/>
            <person name="Lu H."/>
            <person name="Yang F."/>
            <person name="Yang J."/>
            <person name="Chen L."/>
            <person name="Sun L."/>
            <person name="Xu X."/>
            <person name="Xue Y."/>
            <person name="Zhu Y."/>
            <person name="Jin Q."/>
        </authorList>
    </citation>
    <scope>NUCLEOTIDE SEQUENCE [LARGE SCALE GENOMIC DNA]</scope>
    <source>
        <strain>Q1</strain>
    </source>
</reference>
<proteinExistence type="inferred from homology"/>
<gene>
    <name evidence="1" type="primary">tmcAL</name>
    <name type="ordered locus">BCQ_3711</name>
</gene>
<sequence length="393" mass="45290">MQQTKKLTHSDITIAVMSGPFLQRGEPALVSKWYRTKMALACGVDLVVELPYAFSTQKAETFANGAISILNALHVSEICFGSEDGQIENFYNTISVQKNEEETFNRLVKQFMNAGNSYAKATSEAFLHILSSEKNIDMSQPNNILGFQYIKAILMQNSSMQAQTIKRFASHYHDETFNDQHIASATSIRKQLFSENSSFKEIEPFIPKATASLLASYKQNYGTLHNWEQYFSFFKYKLMTMSPEDLRHIYEIEEGLEHRILSKIQTSSSFHSFMEALKTKRYTWTRLQRACTHILTNTTKEEIHCANIEQHAPYIRLLGMSQKGQTYLSKNKKKIELPILTHTKTFDHPTLHIEQKANSVYFSIIQEPLRTQLLKQDATHHPIRYDETTAKFL</sequence>
<dbReference type="EC" id="6.3.4.-" evidence="1"/>
<dbReference type="EMBL" id="CP000227">
    <property type="protein sequence ID" value="ACM14139.1"/>
    <property type="molecule type" value="Genomic_DNA"/>
</dbReference>
<dbReference type="SMR" id="B9IW02"/>
<dbReference type="KEGG" id="bcq:BCQ_3711"/>
<dbReference type="HOGENOM" id="CLU_038915_0_2_9"/>
<dbReference type="Proteomes" id="UP000000441">
    <property type="component" value="Chromosome"/>
</dbReference>
<dbReference type="GO" id="GO:0005737">
    <property type="term" value="C:cytoplasm"/>
    <property type="evidence" value="ECO:0007669"/>
    <property type="project" value="UniProtKB-SubCell"/>
</dbReference>
<dbReference type="GO" id="GO:0005524">
    <property type="term" value="F:ATP binding"/>
    <property type="evidence" value="ECO:0007669"/>
    <property type="project" value="UniProtKB-KW"/>
</dbReference>
<dbReference type="GO" id="GO:0016879">
    <property type="term" value="F:ligase activity, forming carbon-nitrogen bonds"/>
    <property type="evidence" value="ECO:0007669"/>
    <property type="project" value="UniProtKB-UniRule"/>
</dbReference>
<dbReference type="GO" id="GO:0000049">
    <property type="term" value="F:tRNA binding"/>
    <property type="evidence" value="ECO:0007669"/>
    <property type="project" value="UniProtKB-KW"/>
</dbReference>
<dbReference type="GO" id="GO:0006400">
    <property type="term" value="P:tRNA modification"/>
    <property type="evidence" value="ECO:0007669"/>
    <property type="project" value="UniProtKB-UniRule"/>
</dbReference>
<dbReference type="Gene3D" id="3.40.50.620">
    <property type="entry name" value="HUPs"/>
    <property type="match status" value="1"/>
</dbReference>
<dbReference type="HAMAP" id="MF_01539">
    <property type="entry name" value="TmcAL"/>
    <property type="match status" value="1"/>
</dbReference>
<dbReference type="InterPro" id="IPR014729">
    <property type="entry name" value="Rossmann-like_a/b/a_fold"/>
</dbReference>
<dbReference type="InterPro" id="IPR008513">
    <property type="entry name" value="tRNA(Met)_cyd_acetate_ligase"/>
</dbReference>
<dbReference type="NCBIfam" id="NF010191">
    <property type="entry name" value="PRK13670.1"/>
    <property type="match status" value="1"/>
</dbReference>
<dbReference type="PANTHER" id="PTHR37825">
    <property type="entry name" value="TRNA(MET) CYTIDINE ACETATE LIGASE"/>
    <property type="match status" value="1"/>
</dbReference>
<dbReference type="PANTHER" id="PTHR37825:SF1">
    <property type="entry name" value="TRNA(MET) CYTIDINE ACETATE LIGASE"/>
    <property type="match status" value="1"/>
</dbReference>
<dbReference type="Pfam" id="PF05636">
    <property type="entry name" value="HIGH_NTase1"/>
    <property type="match status" value="1"/>
</dbReference>
<dbReference type="SUPFAM" id="SSF52374">
    <property type="entry name" value="Nucleotidylyl transferase"/>
    <property type="match status" value="1"/>
</dbReference>
<keyword id="KW-0067">ATP-binding</keyword>
<keyword id="KW-0963">Cytoplasm</keyword>
<keyword id="KW-0436">Ligase</keyword>
<keyword id="KW-0547">Nucleotide-binding</keyword>
<keyword id="KW-0694">RNA-binding</keyword>
<keyword id="KW-0819">tRNA processing</keyword>
<keyword id="KW-0820">tRNA-binding</keyword>
<feature type="chain" id="PRO_1000185216" description="tRNA(Met) cytidine acetate ligase">
    <location>
        <begin position="1"/>
        <end position="393"/>
    </location>
</feature>
<feature type="binding site" evidence="1">
    <location>
        <position position="81"/>
    </location>
    <ligand>
        <name>ATP</name>
        <dbReference type="ChEBI" id="CHEBI:30616"/>
    </ligand>
</feature>
<feature type="binding site" evidence="1">
    <location>
        <position position="142"/>
    </location>
    <ligand>
        <name>ATP</name>
        <dbReference type="ChEBI" id="CHEBI:30616"/>
    </ligand>
</feature>
<feature type="binding site" evidence="1">
    <location>
        <position position="167"/>
    </location>
    <ligand>
        <name>ATP</name>
        <dbReference type="ChEBI" id="CHEBI:30616"/>
    </ligand>
</feature>
<evidence type="ECO:0000255" key="1">
    <source>
        <dbReference type="HAMAP-Rule" id="MF_01539"/>
    </source>
</evidence>
<accession>B9IW02</accession>
<comment type="function">
    <text evidence="1">Catalyzes the formation of N(4)-acetylcytidine (ac(4)C) at the wobble position of elongator tRNA(Met), using acetate and ATP as substrates. First activates an acetate ion to form acetyladenylate (Ac-AMP) and then transfers the acetyl group to tRNA to form ac(4)C34.</text>
</comment>
<comment type="catalytic activity">
    <reaction evidence="1">
        <text>cytidine(34) in elongator tRNA(Met) + acetate + ATP = N(4)-acetylcytidine(34) in elongator tRNA(Met) + AMP + diphosphate</text>
        <dbReference type="Rhea" id="RHEA:58144"/>
        <dbReference type="Rhea" id="RHEA-COMP:10693"/>
        <dbReference type="Rhea" id="RHEA-COMP:10694"/>
        <dbReference type="ChEBI" id="CHEBI:30089"/>
        <dbReference type="ChEBI" id="CHEBI:30616"/>
        <dbReference type="ChEBI" id="CHEBI:33019"/>
        <dbReference type="ChEBI" id="CHEBI:74900"/>
        <dbReference type="ChEBI" id="CHEBI:82748"/>
        <dbReference type="ChEBI" id="CHEBI:456215"/>
    </reaction>
</comment>
<comment type="subcellular location">
    <subcellularLocation>
        <location evidence="1">Cytoplasm</location>
    </subcellularLocation>
</comment>
<comment type="similarity">
    <text evidence="1">Belongs to the TmcAL family.</text>
</comment>
<organism>
    <name type="scientific">Bacillus cereus (strain Q1)</name>
    <dbReference type="NCBI Taxonomy" id="361100"/>
    <lineage>
        <taxon>Bacteria</taxon>
        <taxon>Bacillati</taxon>
        <taxon>Bacillota</taxon>
        <taxon>Bacilli</taxon>
        <taxon>Bacillales</taxon>
        <taxon>Bacillaceae</taxon>
        <taxon>Bacillus</taxon>
        <taxon>Bacillus cereus group</taxon>
    </lineage>
</organism>
<name>TMCAL_BACCQ</name>
<protein>
    <recommendedName>
        <fullName evidence="1">tRNA(Met) cytidine acetate ligase</fullName>
        <ecNumber evidence="1">6.3.4.-</ecNumber>
    </recommendedName>
</protein>